<name>MTNN_BACHK</name>
<dbReference type="EC" id="3.2.2.9" evidence="1"/>
<dbReference type="EMBL" id="AE017355">
    <property type="protein sequence ID" value="AAT63651.1"/>
    <property type="molecule type" value="Genomic_DNA"/>
</dbReference>
<dbReference type="RefSeq" id="WP_001217037.1">
    <property type="nucleotide sequence ID" value="NC_005957.1"/>
</dbReference>
<dbReference type="RefSeq" id="YP_038425.1">
    <property type="nucleotide sequence ID" value="NC_005957.1"/>
</dbReference>
<dbReference type="SMR" id="Q6HDF1"/>
<dbReference type="KEGG" id="btk:BT9727_4107"/>
<dbReference type="PATRIC" id="fig|281309.8.peg.4384"/>
<dbReference type="HOGENOM" id="CLU_031248_2_2_9"/>
<dbReference type="UniPathway" id="UPA00904">
    <property type="reaction ID" value="UER00871"/>
</dbReference>
<dbReference type="Proteomes" id="UP000001301">
    <property type="component" value="Chromosome"/>
</dbReference>
<dbReference type="GO" id="GO:0005829">
    <property type="term" value="C:cytosol"/>
    <property type="evidence" value="ECO:0007669"/>
    <property type="project" value="TreeGrafter"/>
</dbReference>
<dbReference type="GO" id="GO:0008782">
    <property type="term" value="F:adenosylhomocysteine nucleosidase activity"/>
    <property type="evidence" value="ECO:0007669"/>
    <property type="project" value="UniProtKB-UniRule"/>
</dbReference>
<dbReference type="GO" id="GO:0008930">
    <property type="term" value="F:methylthioadenosine nucleosidase activity"/>
    <property type="evidence" value="ECO:0007669"/>
    <property type="project" value="UniProtKB-UniRule"/>
</dbReference>
<dbReference type="GO" id="GO:0019509">
    <property type="term" value="P:L-methionine salvage from methylthioadenosine"/>
    <property type="evidence" value="ECO:0007669"/>
    <property type="project" value="UniProtKB-UniRule"/>
</dbReference>
<dbReference type="GO" id="GO:0019284">
    <property type="term" value="P:L-methionine salvage from S-adenosylmethionine"/>
    <property type="evidence" value="ECO:0007669"/>
    <property type="project" value="TreeGrafter"/>
</dbReference>
<dbReference type="GO" id="GO:0009164">
    <property type="term" value="P:nucleoside catabolic process"/>
    <property type="evidence" value="ECO:0007669"/>
    <property type="project" value="InterPro"/>
</dbReference>
<dbReference type="CDD" id="cd09008">
    <property type="entry name" value="MTAN"/>
    <property type="match status" value="1"/>
</dbReference>
<dbReference type="FunFam" id="3.40.50.1580:FF:000001">
    <property type="entry name" value="MTA/SAH nucleosidase family protein"/>
    <property type="match status" value="1"/>
</dbReference>
<dbReference type="Gene3D" id="3.40.50.1580">
    <property type="entry name" value="Nucleoside phosphorylase domain"/>
    <property type="match status" value="1"/>
</dbReference>
<dbReference type="HAMAP" id="MF_01684">
    <property type="entry name" value="Salvage_MtnN"/>
    <property type="match status" value="1"/>
</dbReference>
<dbReference type="InterPro" id="IPR010049">
    <property type="entry name" value="MTA_SAH_Nsdase"/>
</dbReference>
<dbReference type="InterPro" id="IPR000845">
    <property type="entry name" value="Nucleoside_phosphorylase_d"/>
</dbReference>
<dbReference type="InterPro" id="IPR035994">
    <property type="entry name" value="Nucleoside_phosphorylase_sf"/>
</dbReference>
<dbReference type="NCBIfam" id="TIGR01704">
    <property type="entry name" value="MTA_SAH-Nsdase"/>
    <property type="match status" value="1"/>
</dbReference>
<dbReference type="NCBIfam" id="NF004079">
    <property type="entry name" value="PRK05584.1"/>
    <property type="match status" value="1"/>
</dbReference>
<dbReference type="PANTHER" id="PTHR46832">
    <property type="entry name" value="5'-METHYLTHIOADENOSINE/S-ADENOSYLHOMOCYSTEINE NUCLEOSIDASE"/>
    <property type="match status" value="1"/>
</dbReference>
<dbReference type="PANTHER" id="PTHR46832:SF1">
    <property type="entry name" value="5'-METHYLTHIOADENOSINE_S-ADENOSYLHOMOCYSTEINE NUCLEOSIDASE"/>
    <property type="match status" value="1"/>
</dbReference>
<dbReference type="Pfam" id="PF01048">
    <property type="entry name" value="PNP_UDP_1"/>
    <property type="match status" value="1"/>
</dbReference>
<dbReference type="SUPFAM" id="SSF53167">
    <property type="entry name" value="Purine and uridine phosphorylases"/>
    <property type="match status" value="1"/>
</dbReference>
<reference key="1">
    <citation type="journal article" date="2006" name="J. Bacteriol.">
        <title>Pathogenomic sequence analysis of Bacillus cereus and Bacillus thuringiensis isolates closely related to Bacillus anthracis.</title>
        <authorList>
            <person name="Han C.S."/>
            <person name="Xie G."/>
            <person name="Challacombe J.F."/>
            <person name="Altherr M.R."/>
            <person name="Bhotika S.S."/>
            <person name="Bruce D."/>
            <person name="Campbell C.S."/>
            <person name="Campbell M.L."/>
            <person name="Chen J."/>
            <person name="Chertkov O."/>
            <person name="Cleland C."/>
            <person name="Dimitrijevic M."/>
            <person name="Doggett N.A."/>
            <person name="Fawcett J.J."/>
            <person name="Glavina T."/>
            <person name="Goodwin L.A."/>
            <person name="Hill K.K."/>
            <person name="Hitchcock P."/>
            <person name="Jackson P.J."/>
            <person name="Keim P."/>
            <person name="Kewalramani A.R."/>
            <person name="Longmire J."/>
            <person name="Lucas S."/>
            <person name="Malfatti S."/>
            <person name="McMurry K."/>
            <person name="Meincke L.J."/>
            <person name="Misra M."/>
            <person name="Moseman B.L."/>
            <person name="Mundt M."/>
            <person name="Munk A.C."/>
            <person name="Okinaka R.T."/>
            <person name="Parson-Quintana B."/>
            <person name="Reilly L.P."/>
            <person name="Richardson P."/>
            <person name="Robinson D.L."/>
            <person name="Rubin E."/>
            <person name="Saunders E."/>
            <person name="Tapia R."/>
            <person name="Tesmer J.G."/>
            <person name="Thayer N."/>
            <person name="Thompson L.S."/>
            <person name="Tice H."/>
            <person name="Ticknor L.O."/>
            <person name="Wills P.L."/>
            <person name="Brettin T.S."/>
            <person name="Gilna P."/>
        </authorList>
    </citation>
    <scope>NUCLEOTIDE SEQUENCE [LARGE SCALE GENOMIC DNA]</scope>
    <source>
        <strain>97-27</strain>
    </source>
</reference>
<evidence type="ECO:0000255" key="1">
    <source>
        <dbReference type="HAMAP-Rule" id="MF_01684"/>
    </source>
</evidence>
<feature type="chain" id="PRO_0000359282" description="5'-methylthioadenosine/S-adenosylhomocysteine nucleosidase">
    <location>
        <begin position="1"/>
        <end position="231"/>
    </location>
</feature>
<feature type="active site" description="Proton acceptor" evidence="1">
    <location>
        <position position="12"/>
    </location>
</feature>
<feature type="active site" description="Proton donor" evidence="1">
    <location>
        <position position="198"/>
    </location>
</feature>
<feature type="binding site" evidence="1">
    <location>
        <position position="78"/>
    </location>
    <ligand>
        <name>substrate</name>
    </ligand>
</feature>
<feature type="binding site" evidence="1">
    <location>
        <position position="153"/>
    </location>
    <ligand>
        <name>substrate</name>
    </ligand>
</feature>
<feature type="binding site" evidence="1">
    <location>
        <begin position="174"/>
        <end position="175"/>
    </location>
    <ligand>
        <name>substrate</name>
    </ligand>
</feature>
<sequence length="231" mass="25227">MRIAVIGAMEEEVRILRDKLEQAETETVAGCEFTKGQLAGHEVILLKSGIGKVNAAMSTTILLEKYKPEKVINTGSAGGFHHSLNVGDVVISTEVRHHDVDVTAFNYEYGQVPGMPPGFKADEALVALAEKCMQAEENIQVVKGMIATGDSFMSDPNRVAAIRDKFENLYAVEMEAAAVAQVCHQYEVPFVIIRALSDIAGKESNVSFDQFLDQAALHSTNFIVKVLEELK</sequence>
<protein>
    <recommendedName>
        <fullName evidence="1">5'-methylthioadenosine/S-adenosylhomocysteine nucleosidase</fullName>
        <shortName evidence="1">MTA/SAH nucleosidase</shortName>
        <shortName evidence="1">MTAN</shortName>
        <ecNumber evidence="1">3.2.2.9</ecNumber>
    </recommendedName>
    <alternativeName>
        <fullName evidence="1">5'-deoxyadenosine nucleosidase</fullName>
        <shortName evidence="1">DOA nucleosidase</shortName>
        <shortName evidence="1">dAdo nucleosidase</shortName>
    </alternativeName>
    <alternativeName>
        <fullName evidence="1">5'-methylthioadenosine nucleosidase</fullName>
        <shortName evidence="1">MTA nucleosidase</shortName>
    </alternativeName>
    <alternativeName>
        <fullName evidence="1">S-adenosylhomocysteine nucleosidase</fullName>
        <shortName evidence="1">AdoHcy nucleosidase</shortName>
        <shortName evidence="1">SAH nucleosidase</shortName>
        <shortName evidence="1">SRH nucleosidase</shortName>
    </alternativeName>
</protein>
<comment type="function">
    <text evidence="1">Catalyzes the irreversible cleavage of the glycosidic bond in both 5'-methylthioadenosine (MTA) and S-adenosylhomocysteine (SAH/AdoHcy) to adenine and the corresponding thioribose, 5'-methylthioribose and S-ribosylhomocysteine, respectively. Also cleaves 5'-deoxyadenosine, a toxic by-product of radical S-adenosylmethionine (SAM) enzymes, into 5-deoxyribose and adenine.</text>
</comment>
<comment type="catalytic activity">
    <reaction evidence="1">
        <text>S-adenosyl-L-homocysteine + H2O = S-(5-deoxy-D-ribos-5-yl)-L-homocysteine + adenine</text>
        <dbReference type="Rhea" id="RHEA:17805"/>
        <dbReference type="ChEBI" id="CHEBI:15377"/>
        <dbReference type="ChEBI" id="CHEBI:16708"/>
        <dbReference type="ChEBI" id="CHEBI:57856"/>
        <dbReference type="ChEBI" id="CHEBI:58195"/>
        <dbReference type="EC" id="3.2.2.9"/>
    </reaction>
</comment>
<comment type="catalytic activity">
    <reaction evidence="1">
        <text>S-methyl-5'-thioadenosine + H2O = 5-(methylsulfanyl)-D-ribose + adenine</text>
        <dbReference type="Rhea" id="RHEA:13617"/>
        <dbReference type="ChEBI" id="CHEBI:15377"/>
        <dbReference type="ChEBI" id="CHEBI:16708"/>
        <dbReference type="ChEBI" id="CHEBI:17509"/>
        <dbReference type="ChEBI" id="CHEBI:78440"/>
        <dbReference type="EC" id="3.2.2.9"/>
    </reaction>
</comment>
<comment type="catalytic activity">
    <reaction evidence="1">
        <text>5'-deoxyadenosine + H2O = 5-deoxy-D-ribose + adenine</text>
        <dbReference type="Rhea" id="RHEA:29859"/>
        <dbReference type="ChEBI" id="CHEBI:15377"/>
        <dbReference type="ChEBI" id="CHEBI:16708"/>
        <dbReference type="ChEBI" id="CHEBI:17319"/>
        <dbReference type="ChEBI" id="CHEBI:149540"/>
        <dbReference type="EC" id="3.2.2.9"/>
    </reaction>
    <physiologicalReaction direction="left-to-right" evidence="1">
        <dbReference type="Rhea" id="RHEA:29860"/>
    </physiologicalReaction>
</comment>
<comment type="pathway">
    <text evidence="1">Amino-acid biosynthesis; L-methionine biosynthesis via salvage pathway; S-methyl-5-thio-alpha-D-ribose 1-phosphate from S-methyl-5'-thioadenosine (hydrolase route): step 1/2.</text>
</comment>
<comment type="similarity">
    <text evidence="1">Belongs to the PNP/UDP phosphorylase family. MtnN subfamily.</text>
</comment>
<proteinExistence type="inferred from homology"/>
<accession>Q6HDF1</accession>
<gene>
    <name evidence="1" type="primary">mtnN</name>
    <name type="ordered locus">BT9727_4107</name>
</gene>
<organism>
    <name type="scientific">Bacillus thuringiensis subsp. konkukian (strain 97-27)</name>
    <dbReference type="NCBI Taxonomy" id="281309"/>
    <lineage>
        <taxon>Bacteria</taxon>
        <taxon>Bacillati</taxon>
        <taxon>Bacillota</taxon>
        <taxon>Bacilli</taxon>
        <taxon>Bacillales</taxon>
        <taxon>Bacillaceae</taxon>
        <taxon>Bacillus</taxon>
        <taxon>Bacillus cereus group</taxon>
    </lineage>
</organism>
<keyword id="KW-0028">Amino-acid biosynthesis</keyword>
<keyword id="KW-0378">Hydrolase</keyword>
<keyword id="KW-0486">Methionine biosynthesis</keyword>